<gene>
    <name evidence="1" type="primary">ppc</name>
    <name type="ordered locus">A1S_3449</name>
</gene>
<dbReference type="EC" id="4.1.1.31" evidence="1"/>
<dbReference type="EMBL" id="CP000521">
    <property type="protein sequence ID" value="ABO13838.1"/>
    <property type="molecule type" value="Genomic_DNA"/>
</dbReference>
<dbReference type="RefSeq" id="WP_000250585.1">
    <property type="nucleotide sequence ID" value="NZ_CACVBA010000001.1"/>
</dbReference>
<dbReference type="SMR" id="A3MA94"/>
<dbReference type="GeneID" id="92895689"/>
<dbReference type="KEGG" id="acb:A1S_3449"/>
<dbReference type="HOGENOM" id="CLU_006557_2_0_6"/>
<dbReference type="GO" id="GO:0005829">
    <property type="term" value="C:cytosol"/>
    <property type="evidence" value="ECO:0007669"/>
    <property type="project" value="TreeGrafter"/>
</dbReference>
<dbReference type="GO" id="GO:0000287">
    <property type="term" value="F:magnesium ion binding"/>
    <property type="evidence" value="ECO:0007669"/>
    <property type="project" value="UniProtKB-UniRule"/>
</dbReference>
<dbReference type="GO" id="GO:0008964">
    <property type="term" value="F:phosphoenolpyruvate carboxylase activity"/>
    <property type="evidence" value="ECO:0007669"/>
    <property type="project" value="UniProtKB-UniRule"/>
</dbReference>
<dbReference type="GO" id="GO:0015977">
    <property type="term" value="P:carbon fixation"/>
    <property type="evidence" value="ECO:0007669"/>
    <property type="project" value="UniProtKB-UniRule"/>
</dbReference>
<dbReference type="GO" id="GO:0006107">
    <property type="term" value="P:oxaloacetate metabolic process"/>
    <property type="evidence" value="ECO:0007669"/>
    <property type="project" value="UniProtKB-UniRule"/>
</dbReference>
<dbReference type="GO" id="GO:0006099">
    <property type="term" value="P:tricarboxylic acid cycle"/>
    <property type="evidence" value="ECO:0007669"/>
    <property type="project" value="InterPro"/>
</dbReference>
<dbReference type="Gene3D" id="1.20.1440.90">
    <property type="entry name" value="Phosphoenolpyruvate/pyruvate domain"/>
    <property type="match status" value="1"/>
</dbReference>
<dbReference type="HAMAP" id="MF_00595">
    <property type="entry name" value="PEPcase_type1"/>
    <property type="match status" value="1"/>
</dbReference>
<dbReference type="InterPro" id="IPR021135">
    <property type="entry name" value="PEP_COase"/>
</dbReference>
<dbReference type="InterPro" id="IPR022805">
    <property type="entry name" value="PEP_COase_bac/pln-type"/>
</dbReference>
<dbReference type="InterPro" id="IPR018129">
    <property type="entry name" value="PEP_COase_Lys_AS"/>
</dbReference>
<dbReference type="InterPro" id="IPR033129">
    <property type="entry name" value="PEPCASE_His_AS"/>
</dbReference>
<dbReference type="InterPro" id="IPR015813">
    <property type="entry name" value="Pyrv/PenolPyrv_kinase-like_dom"/>
</dbReference>
<dbReference type="NCBIfam" id="NF000584">
    <property type="entry name" value="PRK00009.1"/>
    <property type="match status" value="1"/>
</dbReference>
<dbReference type="PANTHER" id="PTHR30523">
    <property type="entry name" value="PHOSPHOENOLPYRUVATE CARBOXYLASE"/>
    <property type="match status" value="1"/>
</dbReference>
<dbReference type="PANTHER" id="PTHR30523:SF6">
    <property type="entry name" value="PHOSPHOENOLPYRUVATE CARBOXYLASE"/>
    <property type="match status" value="1"/>
</dbReference>
<dbReference type="Pfam" id="PF00311">
    <property type="entry name" value="PEPcase"/>
    <property type="match status" value="1"/>
</dbReference>
<dbReference type="PRINTS" id="PR00150">
    <property type="entry name" value="PEPCARBXLASE"/>
</dbReference>
<dbReference type="SUPFAM" id="SSF51621">
    <property type="entry name" value="Phosphoenolpyruvate/pyruvate domain"/>
    <property type="match status" value="1"/>
</dbReference>
<dbReference type="PROSITE" id="PS00781">
    <property type="entry name" value="PEPCASE_1"/>
    <property type="match status" value="1"/>
</dbReference>
<dbReference type="PROSITE" id="PS00393">
    <property type="entry name" value="PEPCASE_2"/>
    <property type="match status" value="1"/>
</dbReference>
<keyword id="KW-0120">Carbon dioxide fixation</keyword>
<keyword id="KW-0456">Lyase</keyword>
<keyword id="KW-0460">Magnesium</keyword>
<reference key="1">
    <citation type="journal article" date="2007" name="Genes Dev.">
        <title>New insights into Acinetobacter baumannii pathogenesis revealed by high-density pyrosequencing and transposon mutagenesis.</title>
        <authorList>
            <person name="Smith M.G."/>
            <person name="Gianoulis T.A."/>
            <person name="Pukatzki S."/>
            <person name="Mekalanos J.J."/>
            <person name="Ornston L.N."/>
            <person name="Gerstein M."/>
            <person name="Snyder M."/>
        </authorList>
    </citation>
    <scope>NUCLEOTIDE SEQUENCE [LARGE SCALE GENOMIC DNA]</scope>
    <source>
        <strain>ATCC 17978 / DSM 105126 / CIP 53.77 / LMG 1025 / NCDC KC755 / 5377</strain>
    </source>
</reference>
<feature type="chain" id="PRO_1000025542" description="Phosphoenolpyruvate carboxylase">
    <location>
        <begin position="1"/>
        <end position="894"/>
    </location>
</feature>
<feature type="active site" evidence="1">
    <location>
        <position position="143"/>
    </location>
</feature>
<feature type="active site" evidence="1">
    <location>
        <position position="556"/>
    </location>
</feature>
<organism>
    <name type="scientific">Acinetobacter baumannii (strain ATCC 17978 / DSM 105126 / CIP 53.77 / LMG 1025 / NCDC KC755 / 5377)</name>
    <dbReference type="NCBI Taxonomy" id="400667"/>
    <lineage>
        <taxon>Bacteria</taxon>
        <taxon>Pseudomonadati</taxon>
        <taxon>Pseudomonadota</taxon>
        <taxon>Gammaproteobacteria</taxon>
        <taxon>Moraxellales</taxon>
        <taxon>Moraxellaceae</taxon>
        <taxon>Acinetobacter</taxon>
        <taxon>Acinetobacter calcoaceticus/baumannii complex</taxon>
    </lineage>
</organism>
<name>CAPP_ACIBT</name>
<evidence type="ECO:0000255" key="1">
    <source>
        <dbReference type="HAMAP-Rule" id="MF_00595"/>
    </source>
</evidence>
<sequence>MVQQIDAPLREDVRLLGNLLGETLKQHAGQELFNQIEQIRALAKGARDGQAEAEKQLEQLFLELPDEELLPLTRAFSHFLNFANIAEQYHVVRSRRQAEFDPDANSPNPLVHLFKKFKDKNISTEKLFQQICDLKIELVLTAHPTEVSRRTLIQKYDDINACLSQLDQQKLTPRERQNALANLKQQISSAWQTDEIRQHRPTPVDEAKWGFATIEQTLWNAVPKFIRELNELVQDNCQQNLPLHIAPVRFASWMGGDRDGNPNVTHQITQEVLWLSRWQAADLYLRDIENLRWELSIQSCSEEMVQAIGSPHPEPYREYLRATRERLKATRHWLAQRLQGLEADDSNVIKSKDELLQPLLLCYRSLIDSNLPEIANGQLLDFIYRVNCFGIELLKLDIRQESGRHRQAISAITEYLGLGNFESWTEQARQNFLIQELQSKRPLLPKYINEPEGSLIGHPDVQEVFATMRTLADQPPESLGAYIISMAEYPSDVLAVLLLQKEAGIQHPLRVVPLFETLKDLDGAATTMNTLFNMHWYKQHIQGKHEVMIGYSDSAKDAGFMSANWAQYRAQEELTAIARKHGVQLTLFHGRGGSISRGGAPTQQALFSQPPGSISGAIRVTEQGEMIRFKFGLEGIAMQNLEIYTAATLEATLLPPPEPKAEWRELMNRMTDHSVKVYRQTVRENPHFVKYLRTVTPELELQMLPLGSRPAKRKVSGGIESLRAIPWVFAWTQIRLMLPAWLGTGAAINEVIADQQKATLDEMLQQWPYFQTLIDMLEMVLSKADANIALYYESHLTEDEDLKVLGNQLRQRLKDAVETLLTLKDESKLLSDNEVLDQSMQVRKPYLLPLHLLQAELMKRRRDYLAERQAEHTPVDHALMVSIAGIAAGLRNTG</sequence>
<protein>
    <recommendedName>
        <fullName evidence="1">Phosphoenolpyruvate carboxylase</fullName>
        <shortName evidence="1">PEPC</shortName>
        <shortName evidence="1">PEPCase</shortName>
        <ecNumber evidence="1">4.1.1.31</ecNumber>
    </recommendedName>
</protein>
<accession>A3MA94</accession>
<comment type="function">
    <text evidence="1">Forms oxaloacetate, a four-carbon dicarboxylic acid source for the tricarboxylic acid cycle.</text>
</comment>
<comment type="catalytic activity">
    <reaction evidence="1">
        <text>oxaloacetate + phosphate = phosphoenolpyruvate + hydrogencarbonate</text>
        <dbReference type="Rhea" id="RHEA:28370"/>
        <dbReference type="ChEBI" id="CHEBI:16452"/>
        <dbReference type="ChEBI" id="CHEBI:17544"/>
        <dbReference type="ChEBI" id="CHEBI:43474"/>
        <dbReference type="ChEBI" id="CHEBI:58702"/>
        <dbReference type="EC" id="4.1.1.31"/>
    </reaction>
</comment>
<comment type="cofactor">
    <cofactor evidence="1">
        <name>Mg(2+)</name>
        <dbReference type="ChEBI" id="CHEBI:18420"/>
    </cofactor>
</comment>
<comment type="similarity">
    <text evidence="1">Belongs to the PEPCase type 1 family.</text>
</comment>
<proteinExistence type="inferred from homology"/>